<feature type="chain" id="PRO_0000284946" description="Twist-related protein 1">
    <location>
        <begin position="1"/>
        <end position="203"/>
    </location>
</feature>
<feature type="domain" description="bHLH" evidence="2">
    <location>
        <begin position="109"/>
        <end position="160"/>
    </location>
</feature>
<feature type="region of interest" description="Disordered" evidence="3">
    <location>
        <begin position="1"/>
        <end position="106"/>
    </location>
</feature>
<feature type="region of interest" description="Sufficient for transactivation activity" evidence="1">
    <location>
        <begin position="162"/>
        <end position="192"/>
    </location>
</feature>
<feature type="compositionally biased region" description="Low complexity" evidence="3">
    <location>
        <begin position="1"/>
        <end position="18"/>
    </location>
</feature>
<feature type="compositionally biased region" description="Basic residues" evidence="3">
    <location>
        <begin position="34"/>
        <end position="43"/>
    </location>
</feature>
<feature type="compositionally biased region" description="Gly residues" evidence="3">
    <location>
        <begin position="46"/>
        <end position="65"/>
    </location>
</feature>
<feature type="compositionally biased region" description="Gly residues" evidence="3">
    <location>
        <begin position="80"/>
        <end position="100"/>
    </location>
</feature>
<name>TWST1_SAGOE</name>
<keyword id="KW-0010">Activator</keyword>
<keyword id="KW-0090">Biological rhythms</keyword>
<keyword id="KW-0217">Developmental protein</keyword>
<keyword id="KW-0221">Differentiation</keyword>
<keyword id="KW-0238">DNA-binding</keyword>
<keyword id="KW-0517">Myogenesis</keyword>
<keyword id="KW-0539">Nucleus</keyword>
<keyword id="KW-0678">Repressor</keyword>
<keyword id="KW-0804">Transcription</keyword>
<keyword id="KW-0805">Transcription regulation</keyword>
<proteinExistence type="inferred from homology"/>
<protein>
    <recommendedName>
        <fullName>Twist-related protein 1</fullName>
    </recommendedName>
</protein>
<organism>
    <name type="scientific">Saguinus oedipus</name>
    <name type="common">Cotton-top tamarin</name>
    <dbReference type="NCBI Taxonomy" id="9490"/>
    <lineage>
        <taxon>Eukaryota</taxon>
        <taxon>Metazoa</taxon>
        <taxon>Chordata</taxon>
        <taxon>Craniata</taxon>
        <taxon>Vertebrata</taxon>
        <taxon>Euteleostomi</taxon>
        <taxon>Mammalia</taxon>
        <taxon>Eutheria</taxon>
        <taxon>Euarchontoglires</taxon>
        <taxon>Primates</taxon>
        <taxon>Haplorrhini</taxon>
        <taxon>Platyrrhini</taxon>
        <taxon>Cebidae</taxon>
        <taxon>Callitrichinae</taxon>
        <taxon>Saguinus</taxon>
    </lineage>
</organism>
<sequence>MMQDVSSSPVSPADDSLSNSEEEPDRQQPQSGKRGGRKRRSSRRSAGGGAGPGGAAGGGVGGGDEPGSPAQGKRGKKSAGCGGGGGSAGGGGGSSSGGGSPQSYEELQTQRVMANVRERQRTQSLNEAFAALRKIIPTLPSDKLSKIQTLKLAARYIDFLYQVLQSDELDSKMASCSYVAHERLSYAFSVWRMEGAWSMSASH</sequence>
<reference key="1">
    <citation type="journal article" date="2002" name="Dev. Genes Evol.">
        <title>Natural Twist protein variants in a panel of eleven non-human primates: possible implications of Twist gene-tree for primate species tree.</title>
        <authorList>
            <person name="Gachot-Neveu H."/>
            <person name="Stoetzel C."/>
            <person name="Quillet R."/>
            <person name="Dollfus H."/>
            <person name="Perrin-Schmitt F."/>
        </authorList>
    </citation>
    <scope>NUCLEOTIDE SEQUENCE [GENOMIC DNA]</scope>
    <source>
        <tissue>Blood</tissue>
    </source>
</reference>
<comment type="function">
    <text evidence="1">Acts as a transcriptional regulator. Inhibits myogenesis by sequestrating E proteins, inhibiting trans-activation by MEF2, and inhibiting DNA-binding by MYOD1 through physical interaction. This interaction probably involves the basic domains of both proteins. Also represses expression of pro-inflammatory cytokines such as TNFA and IL1B. Regulates cranial suture patterning and fusion. Activates transcription as a heterodimer with E proteins. Regulates gene expression differentially, depending on dimer composition. Homodimers induce expression of FGFR2 and POSTN while heterodimers repress FGFR2 and POSTN expression and induce THBS1 expression. Heterodimerization is also required for osteoblast differentiation. Represses the activity of the circadian transcriptional activator: NPAS2-BMAL1 heterodimer (By similarity).</text>
</comment>
<comment type="subunit">
    <text evidence="1">Efficient DNA binding requires dimerization with another bHLH protein. Homodimer or heterodimer with E proteins such as TCF3. ID1 binds preferentially to TCF3 but does not interact efficiently with TWIST1 so ID1 levels control the amount of TCF3 available to dimerize with TWIST and thus determine the type of dimer formed (By similarity).</text>
</comment>
<comment type="subcellular location">
    <subcellularLocation>
        <location evidence="2">Nucleus</location>
    </subcellularLocation>
</comment>
<gene>
    <name type="primary">TWIST1</name>
    <name type="synonym">TWIST</name>
</gene>
<evidence type="ECO:0000250" key="1"/>
<evidence type="ECO:0000255" key="2">
    <source>
        <dbReference type="PROSITE-ProRule" id="PRU00981"/>
    </source>
</evidence>
<evidence type="ECO:0000256" key="3">
    <source>
        <dbReference type="SAM" id="MobiDB-lite"/>
    </source>
</evidence>
<accession>Q8MIB5</accession>
<dbReference type="EMBL" id="AJ488164">
    <property type="protein sequence ID" value="CAD32478.1"/>
    <property type="molecule type" value="Genomic_DNA"/>
</dbReference>
<dbReference type="SMR" id="Q8MIB5"/>
<dbReference type="GO" id="GO:0005634">
    <property type="term" value="C:nucleus"/>
    <property type="evidence" value="ECO:0007669"/>
    <property type="project" value="UniProtKB-SubCell"/>
</dbReference>
<dbReference type="GO" id="GO:0000981">
    <property type="term" value="F:DNA-binding transcription factor activity, RNA polymerase II-specific"/>
    <property type="evidence" value="ECO:0007669"/>
    <property type="project" value="InterPro"/>
</dbReference>
<dbReference type="GO" id="GO:0046983">
    <property type="term" value="F:protein dimerization activity"/>
    <property type="evidence" value="ECO:0007669"/>
    <property type="project" value="InterPro"/>
</dbReference>
<dbReference type="GO" id="GO:0000977">
    <property type="term" value="F:RNA polymerase II transcription regulatory region sequence-specific DNA binding"/>
    <property type="evidence" value="ECO:0007669"/>
    <property type="project" value="TreeGrafter"/>
</dbReference>
<dbReference type="GO" id="GO:0030154">
    <property type="term" value="P:cell differentiation"/>
    <property type="evidence" value="ECO:0007669"/>
    <property type="project" value="UniProtKB-KW"/>
</dbReference>
<dbReference type="GO" id="GO:0007517">
    <property type="term" value="P:muscle organ development"/>
    <property type="evidence" value="ECO:0007669"/>
    <property type="project" value="UniProtKB-KW"/>
</dbReference>
<dbReference type="GO" id="GO:0045892">
    <property type="term" value="P:negative regulation of DNA-templated transcription"/>
    <property type="evidence" value="ECO:0000250"/>
    <property type="project" value="UniProtKB"/>
</dbReference>
<dbReference type="GO" id="GO:0048511">
    <property type="term" value="P:rhythmic process"/>
    <property type="evidence" value="ECO:0007669"/>
    <property type="project" value="UniProtKB-KW"/>
</dbReference>
<dbReference type="CDD" id="cd11412">
    <property type="entry name" value="bHLH_TS_TWIST1"/>
    <property type="match status" value="1"/>
</dbReference>
<dbReference type="FunFam" id="4.10.280.10:FF:000030">
    <property type="entry name" value="Twist transcription factor"/>
    <property type="match status" value="1"/>
</dbReference>
<dbReference type="Gene3D" id="4.10.280.10">
    <property type="entry name" value="Helix-loop-helix DNA-binding domain"/>
    <property type="match status" value="1"/>
</dbReference>
<dbReference type="InterPro" id="IPR011598">
    <property type="entry name" value="bHLH_dom"/>
</dbReference>
<dbReference type="InterPro" id="IPR050283">
    <property type="entry name" value="E-box_TF_Regulators"/>
</dbReference>
<dbReference type="InterPro" id="IPR036638">
    <property type="entry name" value="HLH_DNA-bd_sf"/>
</dbReference>
<dbReference type="InterPro" id="IPR047093">
    <property type="entry name" value="TWIST1_bHLH"/>
</dbReference>
<dbReference type="PANTHER" id="PTHR23349">
    <property type="entry name" value="BASIC HELIX-LOOP-HELIX TRANSCRIPTION FACTOR, TWIST"/>
    <property type="match status" value="1"/>
</dbReference>
<dbReference type="PANTHER" id="PTHR23349:SF64">
    <property type="entry name" value="TWIST-RELATED PROTEIN 1"/>
    <property type="match status" value="1"/>
</dbReference>
<dbReference type="Pfam" id="PF00010">
    <property type="entry name" value="HLH"/>
    <property type="match status" value="1"/>
</dbReference>
<dbReference type="SMART" id="SM00353">
    <property type="entry name" value="HLH"/>
    <property type="match status" value="1"/>
</dbReference>
<dbReference type="SUPFAM" id="SSF47459">
    <property type="entry name" value="HLH, helix-loop-helix DNA-binding domain"/>
    <property type="match status" value="1"/>
</dbReference>
<dbReference type="PROSITE" id="PS50888">
    <property type="entry name" value="BHLH"/>
    <property type="match status" value="1"/>
</dbReference>